<sequence>MPNHQSGSPTGSSDLLLDGKKQRAHLALRRKRRREMRKINRKVRRMNLAPIKEKTAWQHLQALIFEAEEVLKTSQTPQTSLTLFLALLSVLGPPPVSGESYWAYLPKPPILHPVGWGNTDPIRVLTNQTIYLGGSPDFHGFRNMSGNVHFEEKSDTLPICFSFSFSTPTGCFQVDKQVFLSDTPTVDNNKPGGKGDKRRMWELWLTTLGNSGANTKLVPIKKKLPPKYPHCQIAFKKDAFWEGDESAPPRWLPCAFPDQGVSFSPKGALGLLWDFSLPSPSVDQSDQIKSKKDLFGNYTPPVNKEVHRWYEAGWVEPTWFWENSPKDPNDRDFTALVPHTELFRLVAASRYLILKRPGFQEHEMIPTSACVTYPYVILLGLPQLIDIEKRGSTFHISCSSCRLTNCLDSSAYDYAAIIVKRPPYVLLPVDIGDEPWFDDSAIQTFRYATDLIRAKRFVAAIILGISALIAIITSFAVATTALVKEMQTATFVNNLHRNVTLALSEQRIIDLKLEARLNALEEVVLDLGQDVANLKTRMSTRCHANYDFICVTPLPYNASESWERTKAHLLGIWNDNEISYNIQELTNLIGDMSKQHIDTVDLSGLAQSFANGVKALNPLDWTQYFIFIGVGALLLVIVLMIFPIVFQCLAKSLDQVQSDLNVLLLKKKKGGNAAPAAEMVELPRVSYT</sequence>
<protein>
    <recommendedName>
        <fullName>Envelope glycoprotein gp70</fullName>
    </recommendedName>
    <alternativeName>
        <fullName>Env polyprotein</fullName>
    </alternativeName>
    <component>
        <recommendedName>
            <fullName>Surface protein</fullName>
            <shortName>SU</shortName>
        </recommendedName>
        <alternativeName>
            <fullName>Glycoprotein 52</fullName>
            <shortName>gp52</shortName>
        </alternativeName>
    </component>
    <component>
        <recommendedName>
            <fullName>Transmembrane protein</fullName>
            <shortName>TM</shortName>
        </recommendedName>
        <alternativeName>
            <fullName>Glycoprotein 36</fullName>
            <shortName>gp36</shortName>
        </alternativeName>
    </component>
</protein>
<organism>
    <name type="scientific">Mouse mammary tumor virus (strain C3H)</name>
    <name type="common">MMTV</name>
    <dbReference type="NCBI Taxonomy" id="11759"/>
    <lineage>
        <taxon>Viruses</taxon>
        <taxon>Riboviria</taxon>
        <taxon>Pararnavirae</taxon>
        <taxon>Artverviricota</taxon>
        <taxon>Revtraviricetes</taxon>
        <taxon>Ortervirales</taxon>
        <taxon>Retroviridae</taxon>
        <taxon>Orthoretrovirinae</taxon>
        <taxon>Betaretrovirus</taxon>
        <taxon>Mouse mammary tumor virus</taxon>
    </lineage>
</organism>
<keyword id="KW-0165">Cleavage on pair of basic residues</keyword>
<keyword id="KW-0175">Coiled coil</keyword>
<keyword id="KW-0903">Direct protein sequencing</keyword>
<keyword id="KW-1015">Disulfide bond</keyword>
<keyword id="KW-1169">Fusion of virus membrane with host cell membrane</keyword>
<keyword id="KW-1168">Fusion of virus membrane with host membrane</keyword>
<keyword id="KW-0325">Glycoprotein</keyword>
<keyword id="KW-1032">Host cell membrane</keyword>
<keyword id="KW-1043">Host membrane</keyword>
<keyword id="KW-0945">Host-virus interaction</keyword>
<keyword id="KW-0472">Membrane</keyword>
<keyword id="KW-1185">Reference proteome</keyword>
<keyword id="KW-0732">Signal</keyword>
<keyword id="KW-0812">Transmembrane</keyword>
<keyword id="KW-1133">Transmembrane helix</keyword>
<keyword id="KW-1161">Viral attachment to host cell</keyword>
<keyword id="KW-0261">Viral envelope protein</keyword>
<keyword id="KW-1162">Viral penetration into host cytoplasm</keyword>
<keyword id="KW-0946">Virion</keyword>
<keyword id="KW-1160">Virus entry into host cell</keyword>
<name>ENV_MMTVC</name>
<organismHost>
    <name type="scientific">Mus musculus</name>
    <name type="common">Mouse</name>
    <dbReference type="NCBI Taxonomy" id="10090"/>
</organismHost>
<gene>
    <name type="primary">env</name>
</gene>
<reference key="1">
    <citation type="journal article" date="1983" name="J. Virol.">
        <title>Nucleotide sequencing of an apparent proviral copy of env mRNA defines determinants of expression of the mouse mammary tumor virus env gene.</title>
        <authorList>
            <person name="Majors J.E."/>
            <person name="Varmus H.E."/>
        </authorList>
    </citation>
    <scope>NUCLEOTIDE SEQUENCE [MRNA]</scope>
</reference>
<reference key="2">
    <citation type="journal article" date="2000" name="J. Virol.">
        <title>Genetics of mouse mammary tumor virus-induced mammary tumors: linkage of tumor induction to the gag gene.</title>
        <authorList>
            <person name="Hook L.M."/>
            <person name="Agafonova Y."/>
            <person name="Ross S.R."/>
            <person name="Turner S.J."/>
            <person name="Golovkina T.V."/>
        </authorList>
    </citation>
    <scope>NUCLEOTIDE SEQUENCE [GENOMIC DNA]</scope>
</reference>
<reference key="3">
    <citation type="journal article" date="1982" name="J. Virol.">
        <title>Processing and amino acid sequence analysis of the mouse mammary tumor virus env gene product.</title>
        <authorList>
            <person name="Arthur L.O."/>
            <person name="Copeland T.D."/>
            <person name="Oroszlan S."/>
            <person name="Schochetman G."/>
        </authorList>
    </citation>
    <scope>PROTEIN SEQUENCE OF 99-144</scope>
    <scope>PROTEOLYTIC PROCESSING OF POLYPROTEIN</scope>
</reference>
<reference key="4">
    <citation type="journal article" date="1983" name="J. Virol.">
        <title>Terminal amino acid sequences and proteolytic cleavage sites of mouse mammary tumor virus env gene products.</title>
        <authorList>
            <person name="Henderson L.E."/>
            <person name="Sowder R."/>
            <person name="Smythers G."/>
            <person name="Oroszlan S."/>
        </authorList>
    </citation>
    <scope>PROTEIN SEQUENCE OF 457-484</scope>
    <scope>PROTEOLYTIC PROCESSING OF POLYPROTEIN</scope>
</reference>
<reference key="5">
    <citation type="journal article" date="2003" name="J. Virol.">
        <title>Identification of the receptor binding domain of the mouse mammary tumor virus envelope protein.</title>
        <authorList>
            <person name="Zhang Y."/>
            <person name="Rassa J.C."/>
            <person name="deObaldia M.E."/>
            <person name="Albritton L.M."/>
            <person name="Ross S.R."/>
        </authorList>
    </citation>
    <scope>MUTAGENESIS OF PHE-138 AND GLY-140</scope>
</reference>
<accession>Q85646</accession>
<accession>Q9IZT0</accession>
<proteinExistence type="evidence at protein level"/>
<feature type="signal peptide" evidence="4">
    <location>
        <begin position="1"/>
        <end position="98"/>
    </location>
</feature>
<feature type="chain" id="PRO_0000239592" description="Envelope glycoprotein gp70">
    <location>
        <begin position="99"/>
        <end position="688"/>
    </location>
</feature>
<feature type="chain" id="PRO_0000040779" description="Surface protein">
    <location>
        <begin position="99"/>
        <end position="454"/>
    </location>
</feature>
<feature type="propeptide" id="PRO_0000040780" evidence="5">
    <location>
        <begin position="455"/>
        <end position="456"/>
    </location>
</feature>
<feature type="chain" id="PRO_0000040781" description="Transmembrane protein">
    <location>
        <begin position="457"/>
        <end position="688"/>
    </location>
</feature>
<feature type="topological domain" description="Extracellular" evidence="2">
    <location>
        <begin position="99"/>
        <end position="624"/>
    </location>
</feature>
<feature type="transmembrane region" description="Helical" evidence="2">
    <location>
        <begin position="625"/>
        <end position="645"/>
    </location>
</feature>
<feature type="topological domain" description="Cytoplasmic" evidence="2">
    <location>
        <begin position="646"/>
        <end position="688"/>
    </location>
</feature>
<feature type="region of interest" description="Fusion peptide" evidence="1">
    <location>
        <begin position="457"/>
        <end position="477"/>
    </location>
</feature>
<feature type="region of interest" description="Immunosuppression" evidence="1">
    <location>
        <begin position="463"/>
        <end position="481"/>
    </location>
</feature>
<feature type="coiled-coil region" evidence="2">
    <location>
        <begin position="426"/>
        <end position="474"/>
    </location>
</feature>
<feature type="coiled-coil region" evidence="2">
    <location>
        <begin position="511"/>
        <end position="541"/>
    </location>
</feature>
<feature type="site" description="Involved in binding to the cell receptor" evidence="6">
    <location>
        <position position="138"/>
    </location>
</feature>
<feature type="site" description="Cleavage; by host">
    <location>
        <begin position="454"/>
        <end position="455"/>
    </location>
</feature>
<feature type="glycosylation site" description="N-linked (GlcNAc...) asparagine; by host" evidence="2">
    <location>
        <position position="127"/>
    </location>
</feature>
<feature type="glycosylation site" description="N-linked (GlcNAc...) asparagine; by host" evidence="2">
    <location>
        <position position="143"/>
    </location>
</feature>
<feature type="glycosylation site" description="N-linked (GlcNAc...) asparagine; by host" evidence="2">
    <location>
        <position position="498"/>
    </location>
</feature>
<feature type="glycosylation site" description="N-linked (GlcNAc...) asparagine; by host" evidence="2">
    <location>
        <position position="557"/>
    </location>
</feature>
<feature type="mutagenesis site" description="Complete loss of viral infectivity." evidence="3">
    <original>F</original>
    <variation>A</variation>
    <variation>S</variation>
    <location>
        <position position="138"/>
    </location>
</feature>
<feature type="mutagenesis site" description="Slight descrease in viral infectivity." evidence="3">
    <original>F</original>
    <variation>Y</variation>
    <location>
        <position position="138"/>
    </location>
</feature>
<feature type="mutagenesis site" description="No effect on viral infectivity." evidence="3">
    <original>G</original>
    <variation>E</variation>
    <location>
        <position position="140"/>
    </location>
</feature>
<feature type="sequence conflict" description="In Ref. 2; AAF31475." evidence="6" ref="2">
    <original>N</original>
    <variation>K</variation>
    <location>
        <position position="3"/>
    </location>
</feature>
<feature type="sequence conflict" description="In Ref. 2; AAF31475." evidence="6" ref="2">
    <original>T</original>
    <variation>I</variation>
    <location>
        <position position="10"/>
    </location>
</feature>
<feature type="sequence conflict" description="In Ref. 2; AAF31475." evidence="6" ref="2">
    <original>D</original>
    <variation>S</variation>
    <location>
        <position position="18"/>
    </location>
</feature>
<feature type="sequence conflict" description="In Ref. 2; AAF31475." evidence="6" ref="2">
    <original>A</original>
    <variation>P</variation>
    <location>
        <position position="24"/>
    </location>
</feature>
<feature type="sequence conflict" description="In Ref. 2; AAF31475." evidence="6" ref="2">
    <original>S</original>
    <variation>T</variation>
    <location>
        <position position="97"/>
    </location>
</feature>
<feature type="sequence conflict" description="In Ref. 2; AAF31475." evidence="6" ref="2">
    <original>E</original>
    <variation>G</variation>
    <location>
        <position position="152"/>
    </location>
</feature>
<feature type="sequence conflict" description="In Ref. 2; AAF31475." evidence="6" ref="2">
    <original>E</original>
    <variation>D</variation>
    <location>
        <position position="363"/>
    </location>
</feature>
<feature type="sequence conflict" description="In Ref. 2; AAF31475." evidence="6" ref="2">
    <original>YV</original>
    <variation>HA</variation>
    <location>
        <begin position="375"/>
        <end position="376"/>
    </location>
</feature>
<feature type="sequence conflict" description="In Ref. 2; AAF31475." evidence="6" ref="2">
    <original>D</original>
    <variation>E</variation>
    <location>
        <position position="526"/>
    </location>
</feature>
<feature type="sequence conflict" description="In Ref. 2; AAF31475." evidence="6" ref="2">
    <original>G</original>
    <variation>S</variation>
    <location>
        <position position="590"/>
    </location>
</feature>
<comment type="function">
    <text evidence="1">The surface protein (SU) attaches the virus to the host cell by binding to its receptor. This interaction triggers the refolding of the transmembrane protein (TM) and is thought to activate its fusogenic potential by unmasking its fusion peptide. Fusion occurs at the host cell plasma membrane (By similarity).</text>
</comment>
<comment type="function">
    <text evidence="1">The transmembrane protein (TM) acts as a class I viral fusion protein. Under the current model, the protein has at least 3 conformational states: pre-fusion native state, pre-hairpin intermediate state, and post-fusion hairpin state. During viral and target cell membrane fusion, the coiled coil regions (heptad repeats) assume a trimer-of-hairpins structure, positioning the fusion peptide in close proximity to the C-terminal region of the ectodomain. The formation of this structure appears to drive apposition and subsequent fusion of viral and target cell membranes. Membranes fusion leads to delivery of the nucleocapsid into the cytoplasm (By similarity).</text>
</comment>
<comment type="subunit">
    <text evidence="1">The mature envelope protein (Env) consists of a trimer of SU-TM heterodimers attached by non-covalent interactions or by a labile interchain disulfide bond.</text>
</comment>
<comment type="subcellular location">
    <molecule>Transmembrane protein</molecule>
    <subcellularLocation>
        <location evidence="1">Virion membrane</location>
        <topology evidence="1">Single-pass type I membrane protein</topology>
    </subcellularLocation>
    <subcellularLocation>
        <location evidence="1">Host cell membrane</location>
        <topology evidence="1">Single-pass type I membrane protein</topology>
    </subcellularLocation>
</comment>
<comment type="subcellular location">
    <molecule>Surface protein</molecule>
    <subcellularLocation>
        <location>Virion membrane</location>
        <topology>Peripheral membrane protein</topology>
    </subcellularLocation>
    <subcellularLocation>
        <location evidence="1">Host cell membrane</location>
        <topology evidence="1">Peripheral membrane protein</topology>
    </subcellularLocation>
    <text evidence="1">The surface protein is not anchored to the viral envelope, but associates with the extravirion surface through its binding to TM. Both proteins are thought to be concentrated at the site of budding and incorporated into the virions possibly by contacts between the cytoplasmic tail of Env and the N-terminus of Gag (By similarity).</text>
</comment>
<comment type="PTM">
    <text evidence="1">Specific enzymatic cleavages in vivo yield mature proteins. Envelope glycoproteins are synthesized as an inactive precursor that is N-glycosylated and processed likely by host cell furin or by a furin-like protease in the Golgi to yield the mature SU and TM proteins. The cleavage site between SU and TM requires the minimal sequence [KR]-X-[KR]-R (By similarity).</text>
</comment>
<dbReference type="EMBL" id="K00556">
    <property type="protein sequence ID" value="AAA46533.1"/>
    <property type="molecule type" value="mRNA"/>
</dbReference>
<dbReference type="EMBL" id="AF228552">
    <property type="protein sequence ID" value="AAF31475.1"/>
    <property type="molecule type" value="Genomic_DNA"/>
</dbReference>
<dbReference type="PIR" id="S26388">
    <property type="entry name" value="S26388"/>
</dbReference>
<dbReference type="IntAct" id="Q85646">
    <property type="interactions" value="1"/>
</dbReference>
<dbReference type="GlyCosmos" id="Q85646">
    <property type="glycosylation" value="4 sites, No reported glycans"/>
</dbReference>
<dbReference type="Proteomes" id="UP000006540">
    <property type="component" value="Genome"/>
</dbReference>
<dbReference type="GO" id="GO:0020002">
    <property type="term" value="C:host cell plasma membrane"/>
    <property type="evidence" value="ECO:0007669"/>
    <property type="project" value="UniProtKB-SubCell"/>
</dbReference>
<dbReference type="GO" id="GO:0016020">
    <property type="term" value="C:membrane"/>
    <property type="evidence" value="ECO:0007669"/>
    <property type="project" value="UniProtKB-KW"/>
</dbReference>
<dbReference type="GO" id="GO:0019031">
    <property type="term" value="C:viral envelope"/>
    <property type="evidence" value="ECO:0007669"/>
    <property type="project" value="UniProtKB-KW"/>
</dbReference>
<dbReference type="GO" id="GO:0055036">
    <property type="term" value="C:virion membrane"/>
    <property type="evidence" value="ECO:0007669"/>
    <property type="project" value="UniProtKB-SubCell"/>
</dbReference>
<dbReference type="GO" id="GO:0005198">
    <property type="term" value="F:structural molecule activity"/>
    <property type="evidence" value="ECO:0007669"/>
    <property type="project" value="InterPro"/>
</dbReference>
<dbReference type="GO" id="GO:0019064">
    <property type="term" value="P:fusion of virus membrane with host plasma membrane"/>
    <property type="evidence" value="ECO:0007669"/>
    <property type="project" value="UniProtKB-KW"/>
</dbReference>
<dbReference type="GO" id="GO:0046718">
    <property type="term" value="P:symbiont entry into host cell"/>
    <property type="evidence" value="ECO:0007669"/>
    <property type="project" value="UniProtKB-KW"/>
</dbReference>
<dbReference type="GO" id="GO:0019062">
    <property type="term" value="P:virion attachment to host cell"/>
    <property type="evidence" value="ECO:0007669"/>
    <property type="project" value="UniProtKB-KW"/>
</dbReference>
<dbReference type="InterPro" id="IPR000328">
    <property type="entry name" value="GP41-like"/>
</dbReference>
<dbReference type="InterPro" id="IPR051255">
    <property type="entry name" value="Retroviral_env_glycoprotein"/>
</dbReference>
<dbReference type="PANTHER" id="PTHR34313">
    <property type="entry name" value="ENDOGENOUS RETROVIRUS GROUP K MEMBER 113 ENV POLYPROTEIN-RELATED"/>
    <property type="match status" value="1"/>
</dbReference>
<dbReference type="PANTHER" id="PTHR34313:SF2">
    <property type="entry name" value="ENDOGENOUS RETROVIRUS GROUP K MEMBER 21 ENV POLYPROTEIN-LIKE"/>
    <property type="match status" value="1"/>
</dbReference>
<dbReference type="Pfam" id="PF00517">
    <property type="entry name" value="GP41"/>
    <property type="match status" value="1"/>
</dbReference>
<evidence type="ECO:0000250" key="1"/>
<evidence type="ECO:0000255" key="2"/>
<evidence type="ECO:0000269" key="3">
    <source>
    </source>
</evidence>
<evidence type="ECO:0000269" key="4">
    <source>
    </source>
</evidence>
<evidence type="ECO:0000269" key="5">
    <source>
    </source>
</evidence>
<evidence type="ECO:0000305" key="6"/>